<sequence>MAVISMKQLLEAGVHFGHQTRRWNPKMAKYIFTERNGIHVIDLQQTVKYADQAYDFMRDAAANDAVVLFVGTKKQAADAVAEEAVRSGQYFINHRWLGGTLTNWGTIQKRIARLKEIKRMEEDGTFEVLPKKEVALLNKQRARLEKFLGGIEDMPRIPDVMYVVDPHKEQIAVKEAKKLGIPVVAMVDTNTDPDDIDVIIPANDDAIRAVKLITAKLADAIIEGRQGEDAVAVEAEFAASETQADSIEEIVEVVEGDNA</sequence>
<organism>
    <name type="scientific">Streptococcus pneumoniae (strain ATCC 700669 / Spain 23F-1)</name>
    <dbReference type="NCBI Taxonomy" id="561276"/>
    <lineage>
        <taxon>Bacteria</taxon>
        <taxon>Bacillati</taxon>
        <taxon>Bacillota</taxon>
        <taxon>Bacilli</taxon>
        <taxon>Lactobacillales</taxon>
        <taxon>Streptococcaceae</taxon>
        <taxon>Streptococcus</taxon>
    </lineage>
</organism>
<comment type="similarity">
    <text evidence="1">Belongs to the universal ribosomal protein uS2 family.</text>
</comment>
<accession>B8ZQA6</accession>
<name>RS2_STRPJ</name>
<reference key="1">
    <citation type="journal article" date="2009" name="J. Bacteriol.">
        <title>Role of conjugative elements in the evolution of the multidrug-resistant pandemic clone Streptococcus pneumoniae Spain23F ST81.</title>
        <authorList>
            <person name="Croucher N.J."/>
            <person name="Walker D."/>
            <person name="Romero P."/>
            <person name="Lennard N."/>
            <person name="Paterson G.K."/>
            <person name="Bason N.C."/>
            <person name="Mitchell A.M."/>
            <person name="Quail M.A."/>
            <person name="Andrew P.W."/>
            <person name="Parkhill J."/>
            <person name="Bentley S.D."/>
            <person name="Mitchell T.J."/>
        </authorList>
    </citation>
    <scope>NUCLEOTIDE SEQUENCE [LARGE SCALE GENOMIC DNA]</scope>
    <source>
        <strain>ATCC 700669 / Spain 23F-1</strain>
    </source>
</reference>
<keyword id="KW-0687">Ribonucleoprotein</keyword>
<keyword id="KW-0689">Ribosomal protein</keyword>
<dbReference type="EMBL" id="FM211187">
    <property type="protein sequence ID" value="CAR69977.1"/>
    <property type="molecule type" value="Genomic_DNA"/>
</dbReference>
<dbReference type="RefSeq" id="WP_000268466.1">
    <property type="nucleotide sequence ID" value="NC_011900.1"/>
</dbReference>
<dbReference type="SMR" id="B8ZQA6"/>
<dbReference type="GeneID" id="45652565"/>
<dbReference type="KEGG" id="sne:SPN23F22480"/>
<dbReference type="HOGENOM" id="CLU_040318_1_2_9"/>
<dbReference type="GO" id="GO:0022627">
    <property type="term" value="C:cytosolic small ribosomal subunit"/>
    <property type="evidence" value="ECO:0007669"/>
    <property type="project" value="TreeGrafter"/>
</dbReference>
<dbReference type="GO" id="GO:0003735">
    <property type="term" value="F:structural constituent of ribosome"/>
    <property type="evidence" value="ECO:0007669"/>
    <property type="project" value="InterPro"/>
</dbReference>
<dbReference type="GO" id="GO:0006412">
    <property type="term" value="P:translation"/>
    <property type="evidence" value="ECO:0007669"/>
    <property type="project" value="UniProtKB-UniRule"/>
</dbReference>
<dbReference type="CDD" id="cd01425">
    <property type="entry name" value="RPS2"/>
    <property type="match status" value="1"/>
</dbReference>
<dbReference type="FunFam" id="1.10.287.610:FF:000001">
    <property type="entry name" value="30S ribosomal protein S2"/>
    <property type="match status" value="1"/>
</dbReference>
<dbReference type="Gene3D" id="3.40.50.10490">
    <property type="entry name" value="Glucose-6-phosphate isomerase like protein, domain 1"/>
    <property type="match status" value="1"/>
</dbReference>
<dbReference type="Gene3D" id="1.10.287.610">
    <property type="entry name" value="Helix hairpin bin"/>
    <property type="match status" value="1"/>
</dbReference>
<dbReference type="HAMAP" id="MF_00291_B">
    <property type="entry name" value="Ribosomal_uS2_B"/>
    <property type="match status" value="1"/>
</dbReference>
<dbReference type="InterPro" id="IPR001865">
    <property type="entry name" value="Ribosomal_uS2"/>
</dbReference>
<dbReference type="InterPro" id="IPR005706">
    <property type="entry name" value="Ribosomal_uS2_bac/mit/plastid"/>
</dbReference>
<dbReference type="InterPro" id="IPR018130">
    <property type="entry name" value="Ribosomal_uS2_CS"/>
</dbReference>
<dbReference type="InterPro" id="IPR023591">
    <property type="entry name" value="Ribosomal_uS2_flav_dom_sf"/>
</dbReference>
<dbReference type="NCBIfam" id="TIGR01011">
    <property type="entry name" value="rpsB_bact"/>
    <property type="match status" value="1"/>
</dbReference>
<dbReference type="PANTHER" id="PTHR12534">
    <property type="entry name" value="30S RIBOSOMAL PROTEIN S2 PROKARYOTIC AND ORGANELLAR"/>
    <property type="match status" value="1"/>
</dbReference>
<dbReference type="PANTHER" id="PTHR12534:SF0">
    <property type="entry name" value="SMALL RIBOSOMAL SUBUNIT PROTEIN US2M"/>
    <property type="match status" value="1"/>
</dbReference>
<dbReference type="Pfam" id="PF00318">
    <property type="entry name" value="Ribosomal_S2"/>
    <property type="match status" value="1"/>
</dbReference>
<dbReference type="PRINTS" id="PR00395">
    <property type="entry name" value="RIBOSOMALS2"/>
</dbReference>
<dbReference type="SUPFAM" id="SSF52313">
    <property type="entry name" value="Ribosomal protein S2"/>
    <property type="match status" value="1"/>
</dbReference>
<dbReference type="PROSITE" id="PS00962">
    <property type="entry name" value="RIBOSOMAL_S2_1"/>
    <property type="match status" value="1"/>
</dbReference>
<proteinExistence type="inferred from homology"/>
<feature type="chain" id="PRO_1000194348" description="Small ribosomal subunit protein uS2">
    <location>
        <begin position="1"/>
        <end position="259"/>
    </location>
</feature>
<gene>
    <name evidence="1" type="primary">rpsB</name>
    <name type="ordered locus">SPN23F22480</name>
</gene>
<evidence type="ECO:0000255" key="1">
    <source>
        <dbReference type="HAMAP-Rule" id="MF_00291"/>
    </source>
</evidence>
<evidence type="ECO:0000305" key="2"/>
<protein>
    <recommendedName>
        <fullName evidence="1">Small ribosomal subunit protein uS2</fullName>
    </recommendedName>
    <alternativeName>
        <fullName evidence="2">30S ribosomal protein S2</fullName>
    </alternativeName>
</protein>